<feature type="chain" id="PRO_0000382117" description="ATP synthase subunit delta">
    <location>
        <begin position="1"/>
        <end position="179"/>
    </location>
</feature>
<reference key="1">
    <citation type="journal article" date="2006" name="J. Bacteriol.">
        <title>Whole-genome sequence of Listeria welshimeri reveals common steps in genome reduction with Listeria innocua as compared to Listeria monocytogenes.</title>
        <authorList>
            <person name="Hain T."/>
            <person name="Steinweg C."/>
            <person name="Kuenne C.T."/>
            <person name="Billion A."/>
            <person name="Ghai R."/>
            <person name="Chatterjee S.S."/>
            <person name="Domann E."/>
            <person name="Kaerst U."/>
            <person name="Goesmann A."/>
            <person name="Bekel T."/>
            <person name="Bartels D."/>
            <person name="Kaiser O."/>
            <person name="Meyer F."/>
            <person name="Puehler A."/>
            <person name="Weisshaar B."/>
            <person name="Wehland J."/>
            <person name="Liang C."/>
            <person name="Dandekar T."/>
            <person name="Lampidis R."/>
            <person name="Kreft J."/>
            <person name="Goebel W."/>
            <person name="Chakraborty T."/>
        </authorList>
    </citation>
    <scope>NUCLEOTIDE SEQUENCE [LARGE SCALE GENOMIC DNA]</scope>
    <source>
        <strain>ATCC 35897 / DSM 20650 / CCUG 15529 / CIP 8149 / NCTC 11857 / SLCC 5334 / V8</strain>
    </source>
</reference>
<dbReference type="EMBL" id="AM263198">
    <property type="protein sequence ID" value="CAK21898.1"/>
    <property type="molecule type" value="Genomic_DNA"/>
</dbReference>
<dbReference type="RefSeq" id="WP_011703211.1">
    <property type="nucleotide sequence ID" value="NC_008555.1"/>
</dbReference>
<dbReference type="SMR" id="A0ALL6"/>
<dbReference type="STRING" id="386043.lwe2480"/>
<dbReference type="GeneID" id="61190399"/>
<dbReference type="KEGG" id="lwe:lwe2480"/>
<dbReference type="eggNOG" id="COG0712">
    <property type="taxonomic scope" value="Bacteria"/>
</dbReference>
<dbReference type="HOGENOM" id="CLU_085114_1_1_9"/>
<dbReference type="OrthoDB" id="9802471at2"/>
<dbReference type="Proteomes" id="UP000000779">
    <property type="component" value="Chromosome"/>
</dbReference>
<dbReference type="GO" id="GO:0005886">
    <property type="term" value="C:plasma membrane"/>
    <property type="evidence" value="ECO:0007669"/>
    <property type="project" value="UniProtKB-SubCell"/>
</dbReference>
<dbReference type="GO" id="GO:0045259">
    <property type="term" value="C:proton-transporting ATP synthase complex"/>
    <property type="evidence" value="ECO:0007669"/>
    <property type="project" value="UniProtKB-KW"/>
</dbReference>
<dbReference type="GO" id="GO:0046933">
    <property type="term" value="F:proton-transporting ATP synthase activity, rotational mechanism"/>
    <property type="evidence" value="ECO:0007669"/>
    <property type="project" value="UniProtKB-UniRule"/>
</dbReference>
<dbReference type="Gene3D" id="1.10.520.20">
    <property type="entry name" value="N-terminal domain of the delta subunit of the F1F0-ATP synthase"/>
    <property type="match status" value="1"/>
</dbReference>
<dbReference type="HAMAP" id="MF_01416">
    <property type="entry name" value="ATP_synth_delta_bact"/>
    <property type="match status" value="1"/>
</dbReference>
<dbReference type="InterPro" id="IPR026015">
    <property type="entry name" value="ATP_synth_OSCP/delta_N_sf"/>
</dbReference>
<dbReference type="InterPro" id="IPR000711">
    <property type="entry name" value="ATPase_OSCP/dsu"/>
</dbReference>
<dbReference type="NCBIfam" id="TIGR01145">
    <property type="entry name" value="ATP_synt_delta"/>
    <property type="match status" value="1"/>
</dbReference>
<dbReference type="NCBIfam" id="NF004403">
    <property type="entry name" value="PRK05758.2-4"/>
    <property type="match status" value="1"/>
</dbReference>
<dbReference type="PANTHER" id="PTHR11910">
    <property type="entry name" value="ATP SYNTHASE DELTA CHAIN"/>
    <property type="match status" value="1"/>
</dbReference>
<dbReference type="Pfam" id="PF00213">
    <property type="entry name" value="OSCP"/>
    <property type="match status" value="1"/>
</dbReference>
<dbReference type="PRINTS" id="PR00125">
    <property type="entry name" value="ATPASEDELTA"/>
</dbReference>
<dbReference type="SUPFAM" id="SSF47928">
    <property type="entry name" value="N-terminal domain of the delta subunit of the F1F0-ATP synthase"/>
    <property type="match status" value="1"/>
</dbReference>
<comment type="function">
    <text evidence="1">F(1)F(0) ATP synthase produces ATP from ADP in the presence of a proton or sodium gradient. F-type ATPases consist of two structural domains, F(1) containing the extramembraneous catalytic core and F(0) containing the membrane proton channel, linked together by a central stalk and a peripheral stalk. During catalysis, ATP synthesis in the catalytic domain of F(1) is coupled via a rotary mechanism of the central stalk subunits to proton translocation.</text>
</comment>
<comment type="function">
    <text evidence="1">This protein is part of the stalk that links CF(0) to CF(1). It either transmits conformational changes from CF(0) to CF(1) or is implicated in proton conduction.</text>
</comment>
<comment type="subunit">
    <text evidence="1">F-type ATPases have 2 components, F(1) - the catalytic core - and F(0) - the membrane proton channel. F(1) has five subunits: alpha(3), beta(3), gamma(1), delta(1), epsilon(1). F(0) has three main subunits: a(1), b(2) and c(10-14). The alpha and beta chains form an alternating ring which encloses part of the gamma chain. F(1) is attached to F(0) by a central stalk formed by the gamma and epsilon chains, while a peripheral stalk is formed by the delta and b chains.</text>
</comment>
<comment type="subcellular location">
    <subcellularLocation>
        <location evidence="1">Cell membrane</location>
        <topology evidence="1">Peripheral membrane protein</topology>
    </subcellularLocation>
</comment>
<comment type="similarity">
    <text evidence="1">Belongs to the ATPase delta chain family.</text>
</comment>
<gene>
    <name evidence="1" type="primary">atpH</name>
    <name type="ordered locus">lwe2480</name>
</gene>
<name>ATPD_LISW6</name>
<protein>
    <recommendedName>
        <fullName evidence="1">ATP synthase subunit delta</fullName>
    </recommendedName>
    <alternativeName>
        <fullName evidence="1">ATP synthase F(1) sector subunit delta</fullName>
    </alternativeName>
    <alternativeName>
        <fullName evidence="1">F-type ATPase subunit delta</fullName>
        <shortName evidence="1">F-ATPase subunit delta</shortName>
    </alternativeName>
</protein>
<sequence>MSKDLEVAGRYANALFQVAQDKDLVDVFSEELTELKAALNANKDFVKLLENPTFTTEQKKNLASAVFEKINPTLRDFIYLLIDRNREDYLSVIADVYQKRVNDLRGVADADVYSVIPLSEQELTALSRVFAAKMNKTKLNIQNHIDKSLLGGVKVVIGTRIYDDSLKTKLKDMERQIKA</sequence>
<accession>A0ALL6</accession>
<organism>
    <name type="scientific">Listeria welshimeri serovar 6b (strain ATCC 35897 / DSM 20650 / CCUG 15529 / CIP 8149 / NCTC 11857 / SLCC 5334 / V8)</name>
    <dbReference type="NCBI Taxonomy" id="386043"/>
    <lineage>
        <taxon>Bacteria</taxon>
        <taxon>Bacillati</taxon>
        <taxon>Bacillota</taxon>
        <taxon>Bacilli</taxon>
        <taxon>Bacillales</taxon>
        <taxon>Listeriaceae</taxon>
        <taxon>Listeria</taxon>
    </lineage>
</organism>
<evidence type="ECO:0000255" key="1">
    <source>
        <dbReference type="HAMAP-Rule" id="MF_01416"/>
    </source>
</evidence>
<proteinExistence type="inferred from homology"/>
<keyword id="KW-0066">ATP synthesis</keyword>
<keyword id="KW-1003">Cell membrane</keyword>
<keyword id="KW-0139">CF(1)</keyword>
<keyword id="KW-0375">Hydrogen ion transport</keyword>
<keyword id="KW-0406">Ion transport</keyword>
<keyword id="KW-0472">Membrane</keyword>
<keyword id="KW-0813">Transport</keyword>